<sequence>MVKLRLKRCGRKQRAVYRIVAIDVRSRREGRDLQKVGFYDPIKNQTYLNVPAVLYFLGKGAQPTGTVHDISKKAEIFKELRVNQTIRVNQTKGGLHI</sequence>
<accession>Q06GS8</accession>
<proteinExistence type="inferred from homology"/>
<comment type="subcellular location">
    <subcellularLocation>
        <location>Plastid</location>
        <location>Chloroplast</location>
    </subcellularLocation>
</comment>
<comment type="similarity">
    <text evidence="1">Belongs to the bacterial ribosomal protein bS16 family.</text>
</comment>
<geneLocation type="chloroplast"/>
<keyword id="KW-0150">Chloroplast</keyword>
<keyword id="KW-0934">Plastid</keyword>
<keyword id="KW-0687">Ribonucleoprotein</keyword>
<keyword id="KW-0689">Ribosomal protein</keyword>
<feature type="chain" id="PRO_0000276958" description="Small ribosomal subunit protein bS16c">
    <location>
        <begin position="1"/>
        <end position="97"/>
    </location>
</feature>
<evidence type="ECO:0000255" key="1">
    <source>
        <dbReference type="HAMAP-Rule" id="MF_00385"/>
    </source>
</evidence>
<evidence type="ECO:0000305" key="2"/>
<organism>
    <name type="scientific">Piper cenocladum</name>
    <name type="common">Ant piper</name>
    <dbReference type="NCBI Taxonomy" id="398741"/>
    <lineage>
        <taxon>Eukaryota</taxon>
        <taxon>Viridiplantae</taxon>
        <taxon>Streptophyta</taxon>
        <taxon>Embryophyta</taxon>
        <taxon>Tracheophyta</taxon>
        <taxon>Spermatophyta</taxon>
        <taxon>Magnoliopsida</taxon>
        <taxon>Magnoliidae</taxon>
        <taxon>Piperales</taxon>
        <taxon>Piperaceae</taxon>
        <taxon>Piper</taxon>
    </lineage>
</organism>
<reference key="1">
    <citation type="journal article" date="2006" name="BMC Evol. Biol.">
        <title>Complete plastid genome sequences of Drimys, Liriodendron, and Piper: implications for the phylogenetic relationships of magnoliids.</title>
        <authorList>
            <person name="Cai Z."/>
            <person name="Penaflor C."/>
            <person name="Kuehl J.V."/>
            <person name="Leebens-Mack J."/>
            <person name="Carlson J.E."/>
            <person name="dePamphilis C.W."/>
            <person name="Boore J.L."/>
            <person name="Jansen R.K."/>
        </authorList>
    </citation>
    <scope>NUCLEOTIDE SEQUENCE [LARGE SCALE GENOMIC DNA]</scope>
</reference>
<protein>
    <recommendedName>
        <fullName evidence="1">Small ribosomal subunit protein bS16c</fullName>
    </recommendedName>
    <alternativeName>
        <fullName evidence="2">30S ribosomal protein S16, chloroplastic</fullName>
    </alternativeName>
</protein>
<dbReference type="EMBL" id="DQ887677">
    <property type="protein sequence ID" value="ABI14454.1"/>
    <property type="molecule type" value="Genomic_DNA"/>
</dbReference>
<dbReference type="RefSeq" id="YP_784455.1">
    <property type="nucleotide sequence ID" value="NC_008457.1"/>
</dbReference>
<dbReference type="SMR" id="Q06GS8"/>
<dbReference type="GeneID" id="4363763"/>
<dbReference type="GO" id="GO:0009507">
    <property type="term" value="C:chloroplast"/>
    <property type="evidence" value="ECO:0007669"/>
    <property type="project" value="UniProtKB-SubCell"/>
</dbReference>
<dbReference type="GO" id="GO:0005739">
    <property type="term" value="C:mitochondrion"/>
    <property type="evidence" value="ECO:0007669"/>
    <property type="project" value="GOC"/>
</dbReference>
<dbReference type="GO" id="GO:0015935">
    <property type="term" value="C:small ribosomal subunit"/>
    <property type="evidence" value="ECO:0007669"/>
    <property type="project" value="TreeGrafter"/>
</dbReference>
<dbReference type="GO" id="GO:0003735">
    <property type="term" value="F:structural constituent of ribosome"/>
    <property type="evidence" value="ECO:0007669"/>
    <property type="project" value="InterPro"/>
</dbReference>
<dbReference type="GO" id="GO:0032543">
    <property type="term" value="P:mitochondrial translation"/>
    <property type="evidence" value="ECO:0007669"/>
    <property type="project" value="TreeGrafter"/>
</dbReference>
<dbReference type="FunFam" id="3.30.1320.10:FF:000003">
    <property type="entry name" value="30S ribosomal protein S16, chloroplastic"/>
    <property type="match status" value="1"/>
</dbReference>
<dbReference type="Gene3D" id="3.30.1320.10">
    <property type="match status" value="1"/>
</dbReference>
<dbReference type="HAMAP" id="MF_00385">
    <property type="entry name" value="Ribosomal_bS16"/>
    <property type="match status" value="1"/>
</dbReference>
<dbReference type="InterPro" id="IPR000307">
    <property type="entry name" value="Ribosomal_bS16"/>
</dbReference>
<dbReference type="InterPro" id="IPR020592">
    <property type="entry name" value="Ribosomal_bS16_CS"/>
</dbReference>
<dbReference type="InterPro" id="IPR023803">
    <property type="entry name" value="Ribosomal_bS16_dom_sf"/>
</dbReference>
<dbReference type="NCBIfam" id="TIGR00002">
    <property type="entry name" value="S16"/>
    <property type="match status" value="1"/>
</dbReference>
<dbReference type="PANTHER" id="PTHR12919">
    <property type="entry name" value="30S RIBOSOMAL PROTEIN S16"/>
    <property type="match status" value="1"/>
</dbReference>
<dbReference type="PANTHER" id="PTHR12919:SF20">
    <property type="entry name" value="SMALL RIBOSOMAL SUBUNIT PROTEIN BS16M"/>
    <property type="match status" value="1"/>
</dbReference>
<dbReference type="Pfam" id="PF00886">
    <property type="entry name" value="Ribosomal_S16"/>
    <property type="match status" value="1"/>
</dbReference>
<dbReference type="SUPFAM" id="SSF54565">
    <property type="entry name" value="Ribosomal protein S16"/>
    <property type="match status" value="1"/>
</dbReference>
<dbReference type="PROSITE" id="PS00732">
    <property type="entry name" value="RIBOSOMAL_S16"/>
    <property type="match status" value="1"/>
</dbReference>
<gene>
    <name evidence="1" type="primary">rps16</name>
</gene>
<name>RR16_PIPCE</name>